<comment type="function">
    <text evidence="1">Specifically methylates the cytosine at position 1407 (m5C1407) of 16S rRNA.</text>
</comment>
<comment type="catalytic activity">
    <reaction evidence="1">
        <text>cytidine(1407) in 16S rRNA + S-adenosyl-L-methionine = 5-methylcytidine(1407) in 16S rRNA + S-adenosyl-L-homocysteine + H(+)</text>
        <dbReference type="Rhea" id="RHEA:42756"/>
        <dbReference type="Rhea" id="RHEA-COMP:10223"/>
        <dbReference type="Rhea" id="RHEA-COMP:10224"/>
        <dbReference type="ChEBI" id="CHEBI:15378"/>
        <dbReference type="ChEBI" id="CHEBI:57856"/>
        <dbReference type="ChEBI" id="CHEBI:59789"/>
        <dbReference type="ChEBI" id="CHEBI:74483"/>
        <dbReference type="ChEBI" id="CHEBI:82748"/>
        <dbReference type="EC" id="2.1.1.178"/>
    </reaction>
</comment>
<comment type="subcellular location">
    <subcellularLocation>
        <location evidence="1">Cytoplasm</location>
    </subcellularLocation>
</comment>
<comment type="similarity">
    <text evidence="1">Belongs to the class I-like SAM-binding methyltransferase superfamily. RsmB/NOP family.</text>
</comment>
<comment type="sequence caution" evidence="2">
    <conflict type="erroneous initiation">
        <sequence resource="EMBL-CDS" id="AAW85769"/>
    </conflict>
</comment>
<proteinExistence type="inferred from homology"/>
<reference key="1">
    <citation type="journal article" date="2005" name="Proc. Natl. Acad. Sci. U.S.A.">
        <title>Complete genome sequence of Vibrio fischeri: a symbiotic bacterium with pathogenic congeners.</title>
        <authorList>
            <person name="Ruby E.G."/>
            <person name="Urbanowski M."/>
            <person name="Campbell J."/>
            <person name="Dunn A."/>
            <person name="Faini M."/>
            <person name="Gunsalus R."/>
            <person name="Lostroh P."/>
            <person name="Lupp C."/>
            <person name="McCann J."/>
            <person name="Millikan D."/>
            <person name="Schaefer A."/>
            <person name="Stabb E."/>
            <person name="Stevens A."/>
            <person name="Visick K."/>
            <person name="Whistler C."/>
            <person name="Greenberg E.P."/>
        </authorList>
    </citation>
    <scope>NUCLEOTIDE SEQUENCE [LARGE SCALE GENOMIC DNA]</scope>
    <source>
        <strain>ATCC 700601 / ES114</strain>
    </source>
</reference>
<gene>
    <name evidence="1" type="primary">rsmF</name>
    <name type="ordered locus">VF_1274</name>
</gene>
<organism>
    <name type="scientific">Aliivibrio fischeri (strain ATCC 700601 / ES114)</name>
    <name type="common">Vibrio fischeri</name>
    <dbReference type="NCBI Taxonomy" id="312309"/>
    <lineage>
        <taxon>Bacteria</taxon>
        <taxon>Pseudomonadati</taxon>
        <taxon>Pseudomonadota</taxon>
        <taxon>Gammaproteobacteria</taxon>
        <taxon>Vibrionales</taxon>
        <taxon>Vibrionaceae</taxon>
        <taxon>Aliivibrio</taxon>
    </lineage>
</organism>
<sequence>MHDNIFLPDAFLAQVQETMPSYLSMDEFIAACKRPLRRSIRVNILKNSVEEFKQRAAEKQWDLEPVPWCDTGFWITRPESDTVKLGSTAEHMAGLFYIQEASSMMPVTALLKDNDDIEMALDMASAPGSKTTQLAAGMKNQGALVANEFSSSRVKVLCSNIQRCGVSNVALTHFDGRVFGGWLPETFDSILLDAPCSGEGTIRKDPDAMHNWSPESVIEIGDTQRDLIESAFHALKLGGVMVYSTCTLNHEENQNICHHLVEQFGDAVTFEPLGDLFESAEKALTKEGFLHIYPQIFDSEGFFVAKIRKNSSTTPPEVKKRLGKFPFAPASNKEAQAIEAELKSTLQLAIPEDNEFWIRDKEVWAFPKRMKPLIGEMRYHRIGFKLAETHKKGYRWQHEAIMALATADNPTCAELNTEQAREWYMGRDVRPDFSGKGETIVTYKGAVIGLGKWVGNRIKNGLPRELVRDGNLF</sequence>
<accession>Q5E5C7</accession>
<dbReference type="EC" id="2.1.1.178" evidence="1"/>
<dbReference type="EMBL" id="CP000020">
    <property type="protein sequence ID" value="AAW85769.1"/>
    <property type="status" value="ALT_INIT"/>
    <property type="molecule type" value="Genomic_DNA"/>
</dbReference>
<dbReference type="RefSeq" id="WP_047863424.1">
    <property type="nucleotide sequence ID" value="NC_006840.2"/>
</dbReference>
<dbReference type="RefSeq" id="YP_204657.3">
    <property type="nucleotide sequence ID" value="NC_006840.2"/>
</dbReference>
<dbReference type="SMR" id="Q5E5C7"/>
<dbReference type="STRING" id="312309.VF_1274"/>
<dbReference type="EnsemblBacteria" id="AAW85769">
    <property type="protein sequence ID" value="AAW85769"/>
    <property type="gene ID" value="VF_1274"/>
</dbReference>
<dbReference type="GeneID" id="54163946"/>
<dbReference type="KEGG" id="vfi:VF_1274"/>
<dbReference type="PATRIC" id="fig|312309.11.peg.1283"/>
<dbReference type="eggNOG" id="COG0144">
    <property type="taxonomic scope" value="Bacteria"/>
</dbReference>
<dbReference type="eggNOG" id="COG3270">
    <property type="taxonomic scope" value="Bacteria"/>
</dbReference>
<dbReference type="HOGENOM" id="CLU_005316_6_2_6"/>
<dbReference type="OrthoDB" id="9810297at2"/>
<dbReference type="Proteomes" id="UP000000537">
    <property type="component" value="Chromosome I"/>
</dbReference>
<dbReference type="GO" id="GO:0005737">
    <property type="term" value="C:cytoplasm"/>
    <property type="evidence" value="ECO:0007669"/>
    <property type="project" value="UniProtKB-SubCell"/>
</dbReference>
<dbReference type="GO" id="GO:0003723">
    <property type="term" value="F:RNA binding"/>
    <property type="evidence" value="ECO:0007669"/>
    <property type="project" value="UniProtKB-KW"/>
</dbReference>
<dbReference type="GO" id="GO:0009383">
    <property type="term" value="F:rRNA (cytosine-C5-)-methyltransferase activity"/>
    <property type="evidence" value="ECO:0007669"/>
    <property type="project" value="TreeGrafter"/>
</dbReference>
<dbReference type="GO" id="GO:0070475">
    <property type="term" value="P:rRNA base methylation"/>
    <property type="evidence" value="ECO:0007669"/>
    <property type="project" value="TreeGrafter"/>
</dbReference>
<dbReference type="Gene3D" id="3.10.450.720">
    <property type="match status" value="1"/>
</dbReference>
<dbReference type="Gene3D" id="3.40.50.150">
    <property type="entry name" value="Vaccinia Virus protein VP39"/>
    <property type="match status" value="1"/>
</dbReference>
<dbReference type="HAMAP" id="MF_01579">
    <property type="entry name" value="16SrRNA_methyltr_F"/>
    <property type="match status" value="1"/>
</dbReference>
<dbReference type="InterPro" id="IPR031341">
    <property type="entry name" value="Methyltr_RsmF_N"/>
</dbReference>
<dbReference type="InterPro" id="IPR049560">
    <property type="entry name" value="MeTrfase_RsmB-F_NOP2_cat"/>
</dbReference>
<dbReference type="InterPro" id="IPR001678">
    <property type="entry name" value="MeTrfase_RsmB-F_NOP2_dom"/>
</dbReference>
<dbReference type="InterPro" id="IPR027391">
    <property type="entry name" value="Nol1_Nop2_Fmu_2"/>
</dbReference>
<dbReference type="InterPro" id="IPR011023">
    <property type="entry name" value="Nop2p"/>
</dbReference>
<dbReference type="InterPro" id="IPR023267">
    <property type="entry name" value="RCMT"/>
</dbReference>
<dbReference type="InterPro" id="IPR023545">
    <property type="entry name" value="rRNA_ssu_MeTfrase_F"/>
</dbReference>
<dbReference type="InterPro" id="IPR029063">
    <property type="entry name" value="SAM-dependent_MTases_sf"/>
</dbReference>
<dbReference type="InterPro" id="IPR048457">
    <property type="entry name" value="YebU_pre-PUA_dom"/>
</dbReference>
<dbReference type="NCBIfam" id="TIGR00446">
    <property type="entry name" value="nop2p"/>
    <property type="match status" value="1"/>
</dbReference>
<dbReference type="NCBIfam" id="NF008898">
    <property type="entry name" value="PRK11933.1"/>
    <property type="match status" value="1"/>
</dbReference>
<dbReference type="PANTHER" id="PTHR22807:SF30">
    <property type="entry name" value="28S RRNA (CYTOSINE(4447)-C(5))-METHYLTRANSFERASE-RELATED"/>
    <property type="match status" value="1"/>
</dbReference>
<dbReference type="PANTHER" id="PTHR22807">
    <property type="entry name" value="NOP2 YEAST -RELATED NOL1/NOP2/FMU SUN DOMAIN-CONTAINING"/>
    <property type="match status" value="1"/>
</dbReference>
<dbReference type="Pfam" id="PF01189">
    <property type="entry name" value="Methyltr_RsmB-F"/>
    <property type="match status" value="1"/>
</dbReference>
<dbReference type="Pfam" id="PF17125">
    <property type="entry name" value="Methyltr_RsmF_N"/>
    <property type="match status" value="1"/>
</dbReference>
<dbReference type="Pfam" id="PF13636">
    <property type="entry name" value="Methyltranf_PUA"/>
    <property type="match status" value="1"/>
</dbReference>
<dbReference type="Pfam" id="PF21150">
    <property type="entry name" value="YebU_pre-PUA_dom"/>
    <property type="match status" value="1"/>
</dbReference>
<dbReference type="PRINTS" id="PR02008">
    <property type="entry name" value="RCMTFAMILY"/>
</dbReference>
<dbReference type="SUPFAM" id="SSF53335">
    <property type="entry name" value="S-adenosyl-L-methionine-dependent methyltransferases"/>
    <property type="match status" value="1"/>
</dbReference>
<dbReference type="PROSITE" id="PS51686">
    <property type="entry name" value="SAM_MT_RSMB_NOP"/>
    <property type="match status" value="1"/>
</dbReference>
<evidence type="ECO:0000255" key="1">
    <source>
        <dbReference type="HAMAP-Rule" id="MF_01579"/>
    </source>
</evidence>
<evidence type="ECO:0000305" key="2"/>
<protein>
    <recommendedName>
        <fullName evidence="1">Ribosomal RNA small subunit methyltransferase F</fullName>
        <ecNumber evidence="1">2.1.1.178</ecNumber>
    </recommendedName>
    <alternativeName>
        <fullName evidence="1">16S rRNA m5C1407 methyltransferase</fullName>
    </alternativeName>
    <alternativeName>
        <fullName evidence="1">rRNA (cytosine-C(5)-)-methyltransferase RsmF</fullName>
    </alternativeName>
</protein>
<feature type="chain" id="PRO_0000285023" description="Ribosomal RNA small subunit methyltransferase F">
    <location>
        <begin position="1"/>
        <end position="473"/>
    </location>
</feature>
<feature type="active site" description="Nucleophile" evidence="1">
    <location>
        <position position="246"/>
    </location>
</feature>
<feature type="binding site" evidence="1">
    <location>
        <begin position="124"/>
        <end position="130"/>
    </location>
    <ligand>
        <name>S-adenosyl-L-methionine</name>
        <dbReference type="ChEBI" id="CHEBI:59789"/>
    </ligand>
</feature>
<feature type="binding site" evidence="1">
    <location>
        <position position="148"/>
    </location>
    <ligand>
        <name>S-adenosyl-L-methionine</name>
        <dbReference type="ChEBI" id="CHEBI:59789"/>
    </ligand>
</feature>
<feature type="binding site" evidence="1">
    <location>
        <position position="175"/>
    </location>
    <ligand>
        <name>S-adenosyl-L-methionine</name>
        <dbReference type="ChEBI" id="CHEBI:59789"/>
    </ligand>
</feature>
<feature type="binding site" evidence="1">
    <location>
        <position position="193"/>
    </location>
    <ligand>
        <name>S-adenosyl-L-methionine</name>
        <dbReference type="ChEBI" id="CHEBI:59789"/>
    </ligand>
</feature>
<keyword id="KW-0963">Cytoplasm</keyword>
<keyword id="KW-0489">Methyltransferase</keyword>
<keyword id="KW-1185">Reference proteome</keyword>
<keyword id="KW-0694">RNA-binding</keyword>
<keyword id="KW-0698">rRNA processing</keyword>
<keyword id="KW-0949">S-adenosyl-L-methionine</keyword>
<keyword id="KW-0808">Transferase</keyword>
<name>RSMF_ALIF1</name>